<keyword id="KW-0175">Coiled coil</keyword>
<keyword id="KW-0238">DNA-binding</keyword>
<keyword id="KW-1185">Reference proteome</keyword>
<keyword id="KW-0804">Transcription</keyword>
<keyword id="KW-0805">Transcription regulation</keyword>
<name>GREA_SACEN</name>
<gene>
    <name evidence="1" type="primary">greA</name>
    <name type="ordered locus">SACE_0907</name>
</gene>
<organism>
    <name type="scientific">Saccharopolyspora erythraea (strain ATCC 11635 / DSM 40517 / JCM 4748 / NBRC 13426 / NCIMB 8594 / NRRL 2338)</name>
    <dbReference type="NCBI Taxonomy" id="405948"/>
    <lineage>
        <taxon>Bacteria</taxon>
        <taxon>Bacillati</taxon>
        <taxon>Actinomycetota</taxon>
        <taxon>Actinomycetes</taxon>
        <taxon>Pseudonocardiales</taxon>
        <taxon>Pseudonocardiaceae</taxon>
        <taxon>Saccharopolyspora</taxon>
    </lineage>
</organism>
<protein>
    <recommendedName>
        <fullName evidence="1">Transcription elongation factor GreA</fullName>
    </recommendedName>
    <alternativeName>
        <fullName evidence="1">Transcript cleavage factor GreA</fullName>
    </alternativeName>
</protein>
<accession>A4F866</accession>
<sequence length="162" mass="17854">MSETQVTWLTQDAFDRLKSELDELVGNRPVIAAKINEAREEGDLKENGGYHAAREEQGHLESRIRQLQELLRTAKVGDVPTEAGVAKPGSVLTVRYDDEDETEKFLLATREEGAHGDLEVYSPSSPLGQALLDAKEGETREYELPNGGTMKVTLVKAEPFTG</sequence>
<comment type="function">
    <text evidence="1">Necessary for efficient RNA polymerase transcription elongation past template-encoded arresting sites. The arresting sites in DNA have the property of trapping a certain fraction of elongating RNA polymerases that pass through, resulting in locked ternary complexes. Cleavage of the nascent transcript by cleavage factors such as GreA or GreB allows the resumption of elongation from the new 3'terminus. GreA releases sequences of 2 to 3 nucleotides.</text>
</comment>
<comment type="similarity">
    <text evidence="1">Belongs to the GreA/GreB family.</text>
</comment>
<proteinExistence type="inferred from homology"/>
<dbReference type="EMBL" id="AM420293">
    <property type="protein sequence ID" value="CAM00241.1"/>
    <property type="molecule type" value="Genomic_DNA"/>
</dbReference>
<dbReference type="RefSeq" id="WP_009950486.1">
    <property type="nucleotide sequence ID" value="NC_009142.1"/>
</dbReference>
<dbReference type="SMR" id="A4F866"/>
<dbReference type="STRING" id="405948.SACE_0907"/>
<dbReference type="KEGG" id="sen:SACE_0907"/>
<dbReference type="eggNOG" id="COG0782">
    <property type="taxonomic scope" value="Bacteria"/>
</dbReference>
<dbReference type="HOGENOM" id="CLU_101379_0_0_11"/>
<dbReference type="Proteomes" id="UP000006728">
    <property type="component" value="Chromosome"/>
</dbReference>
<dbReference type="GO" id="GO:0003677">
    <property type="term" value="F:DNA binding"/>
    <property type="evidence" value="ECO:0007669"/>
    <property type="project" value="UniProtKB-UniRule"/>
</dbReference>
<dbReference type="GO" id="GO:0070063">
    <property type="term" value="F:RNA polymerase binding"/>
    <property type="evidence" value="ECO:0007669"/>
    <property type="project" value="InterPro"/>
</dbReference>
<dbReference type="GO" id="GO:0006354">
    <property type="term" value="P:DNA-templated transcription elongation"/>
    <property type="evidence" value="ECO:0007669"/>
    <property type="project" value="TreeGrafter"/>
</dbReference>
<dbReference type="GO" id="GO:0032784">
    <property type="term" value="P:regulation of DNA-templated transcription elongation"/>
    <property type="evidence" value="ECO:0007669"/>
    <property type="project" value="UniProtKB-UniRule"/>
</dbReference>
<dbReference type="FunFam" id="1.10.287.180:FF:000001">
    <property type="entry name" value="Transcription elongation factor GreA"/>
    <property type="match status" value="1"/>
</dbReference>
<dbReference type="Gene3D" id="3.10.50.30">
    <property type="entry name" value="Transcription elongation factor, GreA/GreB, C-terminal domain"/>
    <property type="match status" value="1"/>
</dbReference>
<dbReference type="Gene3D" id="1.10.287.180">
    <property type="entry name" value="Transcription elongation factor, GreA/GreB, N-terminal domain"/>
    <property type="match status" value="1"/>
</dbReference>
<dbReference type="HAMAP" id="MF_00105">
    <property type="entry name" value="GreA_GreB"/>
    <property type="match status" value="1"/>
</dbReference>
<dbReference type="InterPro" id="IPR036953">
    <property type="entry name" value="GreA/GreB_C_sf"/>
</dbReference>
<dbReference type="InterPro" id="IPR018151">
    <property type="entry name" value="TF_GreA/GreB_CS"/>
</dbReference>
<dbReference type="InterPro" id="IPR028624">
    <property type="entry name" value="Tscrpt_elong_fac_GreA/B"/>
</dbReference>
<dbReference type="InterPro" id="IPR001437">
    <property type="entry name" value="Tscrpt_elong_fac_GreA/B_C"/>
</dbReference>
<dbReference type="InterPro" id="IPR023459">
    <property type="entry name" value="Tscrpt_elong_fac_GreA/B_fam"/>
</dbReference>
<dbReference type="InterPro" id="IPR022691">
    <property type="entry name" value="Tscrpt_elong_fac_GreA/B_N"/>
</dbReference>
<dbReference type="InterPro" id="IPR036805">
    <property type="entry name" value="Tscrpt_elong_fac_GreA/B_N_sf"/>
</dbReference>
<dbReference type="NCBIfam" id="NF001262">
    <property type="entry name" value="PRK00226.1-3"/>
    <property type="match status" value="1"/>
</dbReference>
<dbReference type="PANTHER" id="PTHR30437">
    <property type="entry name" value="TRANSCRIPTION ELONGATION FACTOR GREA"/>
    <property type="match status" value="1"/>
</dbReference>
<dbReference type="PANTHER" id="PTHR30437:SF4">
    <property type="entry name" value="TRANSCRIPTION ELONGATION FACTOR GREA"/>
    <property type="match status" value="1"/>
</dbReference>
<dbReference type="Pfam" id="PF01272">
    <property type="entry name" value="GreA_GreB"/>
    <property type="match status" value="1"/>
</dbReference>
<dbReference type="Pfam" id="PF03449">
    <property type="entry name" value="GreA_GreB_N"/>
    <property type="match status" value="1"/>
</dbReference>
<dbReference type="PIRSF" id="PIRSF006092">
    <property type="entry name" value="GreA_GreB"/>
    <property type="match status" value="1"/>
</dbReference>
<dbReference type="SUPFAM" id="SSF54534">
    <property type="entry name" value="FKBP-like"/>
    <property type="match status" value="1"/>
</dbReference>
<dbReference type="SUPFAM" id="SSF46557">
    <property type="entry name" value="GreA transcript cleavage protein, N-terminal domain"/>
    <property type="match status" value="1"/>
</dbReference>
<dbReference type="PROSITE" id="PS00829">
    <property type="entry name" value="GREAB_1"/>
    <property type="match status" value="1"/>
</dbReference>
<dbReference type="PROSITE" id="PS00830">
    <property type="entry name" value="GREAB_2"/>
    <property type="match status" value="1"/>
</dbReference>
<feature type="chain" id="PRO_1000034295" description="Transcription elongation factor GreA">
    <location>
        <begin position="1"/>
        <end position="162"/>
    </location>
</feature>
<feature type="coiled-coil region" evidence="1">
    <location>
        <begin position="50"/>
        <end position="75"/>
    </location>
</feature>
<reference key="1">
    <citation type="journal article" date="2007" name="Nat. Biotechnol.">
        <title>Complete genome sequence of the erythromycin-producing bacterium Saccharopolyspora erythraea NRRL23338.</title>
        <authorList>
            <person name="Oliynyk M."/>
            <person name="Samborskyy M."/>
            <person name="Lester J.B."/>
            <person name="Mironenko T."/>
            <person name="Scott N."/>
            <person name="Dickens S."/>
            <person name="Haydock S.F."/>
            <person name="Leadlay P.F."/>
        </authorList>
    </citation>
    <scope>NUCLEOTIDE SEQUENCE [LARGE SCALE GENOMIC DNA]</scope>
    <source>
        <strain>ATCC 11635 / DSM 40517 / JCM 4748 / NBRC 13426 / NCIMB 8594 / NRRL 2338</strain>
    </source>
</reference>
<evidence type="ECO:0000255" key="1">
    <source>
        <dbReference type="HAMAP-Rule" id="MF_00105"/>
    </source>
</evidence>